<proteinExistence type="inferred from homology"/>
<organism>
    <name type="scientific">Bos taurus</name>
    <name type="common">Bovine</name>
    <dbReference type="NCBI Taxonomy" id="9913"/>
    <lineage>
        <taxon>Eukaryota</taxon>
        <taxon>Metazoa</taxon>
        <taxon>Chordata</taxon>
        <taxon>Craniata</taxon>
        <taxon>Vertebrata</taxon>
        <taxon>Euteleostomi</taxon>
        <taxon>Mammalia</taxon>
        <taxon>Eutheria</taxon>
        <taxon>Laurasiatheria</taxon>
        <taxon>Artiodactyla</taxon>
        <taxon>Ruminantia</taxon>
        <taxon>Pecora</taxon>
        <taxon>Bovidae</taxon>
        <taxon>Bovinae</taxon>
        <taxon>Bos</taxon>
    </lineage>
</organism>
<protein>
    <recommendedName>
        <fullName evidence="6">Small ubiquitin-related modifier 2</fullName>
        <shortName evidence="6">SUMO-2</shortName>
    </recommendedName>
    <alternativeName>
        <fullName evidence="5">Ubiquitin-like protein SMT3B</fullName>
        <shortName evidence="5">Smt3B</shortName>
    </alternativeName>
</protein>
<keyword id="KW-0007">Acetylation</keyword>
<keyword id="KW-1017">Isopeptide bond</keyword>
<keyword id="KW-0539">Nucleus</keyword>
<keyword id="KW-1185">Reference proteome</keyword>
<keyword id="KW-0832">Ubl conjugation</keyword>
<keyword id="KW-0833">Ubl conjugation pathway</keyword>
<name>SUMO2_BOVIN</name>
<gene>
    <name evidence="6" type="primary">SUMO2</name>
    <name evidence="5" type="synonym">SMT3B</name>
</gene>
<dbReference type="EMBL" id="U89439">
    <property type="protein sequence ID" value="AAB49682.1"/>
    <property type="molecule type" value="mRNA"/>
</dbReference>
<dbReference type="EMBL" id="BT021041">
    <property type="protein sequence ID" value="AAX09058.1"/>
    <property type="molecule type" value="mRNA"/>
</dbReference>
<dbReference type="EMBL" id="BC102379">
    <property type="protein sequence ID" value="AAI02380.1"/>
    <property type="molecule type" value="mRNA"/>
</dbReference>
<dbReference type="RefSeq" id="NP_777194.1">
    <property type="nucleotide sequence ID" value="NM_174769.2"/>
</dbReference>
<dbReference type="RefSeq" id="XP_015314492.1">
    <property type="nucleotide sequence ID" value="XM_015459006.1"/>
</dbReference>
<dbReference type="RefSeq" id="XP_059734616.1">
    <property type="nucleotide sequence ID" value="XM_059878633.1"/>
</dbReference>
<dbReference type="BMRB" id="P61955"/>
<dbReference type="SMR" id="P61955"/>
<dbReference type="FunCoup" id="P61955">
    <property type="interactions" value="3479"/>
</dbReference>
<dbReference type="STRING" id="9913.ENSBTAP00000040189"/>
<dbReference type="PeptideAtlas" id="P61955"/>
<dbReference type="Ensembl" id="ENSBTAT00000042554.4">
    <property type="protein sequence ID" value="ENSBTAP00000040189.4"/>
    <property type="gene ID" value="ENSBTAG00000030169.5"/>
</dbReference>
<dbReference type="GeneID" id="132342073"/>
<dbReference type="GeneID" id="286807"/>
<dbReference type="KEGG" id="bta:286807"/>
<dbReference type="VEuPathDB" id="HostDB:ENSBTAG00000030169"/>
<dbReference type="GeneTree" id="ENSGT00950000182895"/>
<dbReference type="InParanoid" id="P61955"/>
<dbReference type="OMA" id="MKIYCAR"/>
<dbReference type="OrthoDB" id="9925208at2759"/>
<dbReference type="Reactome" id="R-BTA-196791">
    <property type="pathway name" value="Vitamin D (calciferol) metabolism"/>
</dbReference>
<dbReference type="Reactome" id="R-BTA-3065679">
    <property type="pathway name" value="SUMO is proteolytically processed"/>
</dbReference>
<dbReference type="Reactome" id="R-BTA-3108214">
    <property type="pathway name" value="SUMOylation of DNA damage response and repair proteins"/>
</dbReference>
<dbReference type="Reactome" id="R-BTA-3232118">
    <property type="pathway name" value="SUMOylation of transcription factors"/>
</dbReference>
<dbReference type="Reactome" id="R-BTA-3899300">
    <property type="pathway name" value="SUMOylation of transcription cofactors"/>
</dbReference>
<dbReference type="Reactome" id="R-BTA-4085377">
    <property type="pathway name" value="SUMOylation of SUMOylation proteins"/>
</dbReference>
<dbReference type="Reactome" id="R-BTA-4090294">
    <property type="pathway name" value="SUMOylation of intracellular receptors"/>
</dbReference>
<dbReference type="Reactome" id="R-BTA-4551638">
    <property type="pathway name" value="SUMOylation of chromatin organization proteins"/>
</dbReference>
<dbReference type="Reactome" id="R-BTA-4570464">
    <property type="pathway name" value="SUMOylation of RNA binding proteins"/>
</dbReference>
<dbReference type="Reactome" id="R-BTA-4615885">
    <property type="pathway name" value="SUMOylation of DNA replication proteins"/>
</dbReference>
<dbReference type="Reactome" id="R-BTA-5693607">
    <property type="pathway name" value="Processing of DNA double-strand break ends"/>
</dbReference>
<dbReference type="Reactome" id="R-BTA-5696395">
    <property type="pathway name" value="Formation of Incision Complex in GG-NER"/>
</dbReference>
<dbReference type="Proteomes" id="UP000009136">
    <property type="component" value="Chromosome 19"/>
</dbReference>
<dbReference type="Bgee" id="ENSBTAG00000030169">
    <property type="expression patterns" value="Expressed in oocyte and 104 other cell types or tissues"/>
</dbReference>
<dbReference type="GO" id="GO:0005634">
    <property type="term" value="C:nucleus"/>
    <property type="evidence" value="ECO:0000318"/>
    <property type="project" value="GO_Central"/>
</dbReference>
<dbReference type="GO" id="GO:0016605">
    <property type="term" value="C:PML body"/>
    <property type="evidence" value="ECO:0000250"/>
    <property type="project" value="UniProtKB"/>
</dbReference>
<dbReference type="GO" id="GO:0031386">
    <property type="term" value="F:protein tag activity"/>
    <property type="evidence" value="ECO:0000318"/>
    <property type="project" value="GO_Central"/>
</dbReference>
<dbReference type="GO" id="GO:0031625">
    <property type="term" value="F:ubiquitin protein ligase binding"/>
    <property type="evidence" value="ECO:0000250"/>
    <property type="project" value="UniProtKB"/>
</dbReference>
<dbReference type="GO" id="GO:0044389">
    <property type="term" value="F:ubiquitin-like protein ligase binding"/>
    <property type="evidence" value="ECO:0000318"/>
    <property type="project" value="GO_Central"/>
</dbReference>
<dbReference type="GO" id="GO:0016925">
    <property type="term" value="P:protein sumoylation"/>
    <property type="evidence" value="ECO:0000250"/>
    <property type="project" value="UniProtKB"/>
</dbReference>
<dbReference type="CDD" id="cd16115">
    <property type="entry name" value="Ubl_SUMO2_3_4"/>
    <property type="match status" value="1"/>
</dbReference>
<dbReference type="FunFam" id="3.10.20.90:FF:000482">
    <property type="entry name" value="Small ubiquitin-related modifier 2"/>
    <property type="match status" value="1"/>
</dbReference>
<dbReference type="Gene3D" id="3.10.20.90">
    <property type="entry name" value="Phosphatidylinositol 3-kinase Catalytic Subunit, Chain A, domain 1"/>
    <property type="match status" value="1"/>
</dbReference>
<dbReference type="InterPro" id="IPR022617">
    <property type="entry name" value="Rad60/SUMO-like_dom"/>
</dbReference>
<dbReference type="InterPro" id="IPR000626">
    <property type="entry name" value="Ubiquitin-like_dom"/>
</dbReference>
<dbReference type="InterPro" id="IPR029071">
    <property type="entry name" value="Ubiquitin-like_domsf"/>
</dbReference>
<dbReference type="PANTHER" id="PTHR10562">
    <property type="entry name" value="SMALL UBIQUITIN-RELATED MODIFIER"/>
    <property type="match status" value="1"/>
</dbReference>
<dbReference type="Pfam" id="PF11976">
    <property type="entry name" value="Rad60-SLD"/>
    <property type="match status" value="1"/>
</dbReference>
<dbReference type="SMART" id="SM00213">
    <property type="entry name" value="UBQ"/>
    <property type="match status" value="1"/>
</dbReference>
<dbReference type="SUPFAM" id="SSF54236">
    <property type="entry name" value="Ubiquitin-like"/>
    <property type="match status" value="1"/>
</dbReference>
<dbReference type="PROSITE" id="PS50053">
    <property type="entry name" value="UBIQUITIN_2"/>
    <property type="match status" value="1"/>
</dbReference>
<evidence type="ECO:0000250" key="1"/>
<evidence type="ECO:0000250" key="2">
    <source>
        <dbReference type="UniProtKB" id="P61956"/>
    </source>
</evidence>
<evidence type="ECO:0000250" key="3">
    <source>
        <dbReference type="UniProtKB" id="P61957"/>
    </source>
</evidence>
<evidence type="ECO:0000255" key="4">
    <source>
        <dbReference type="PROSITE-ProRule" id="PRU00214"/>
    </source>
</evidence>
<evidence type="ECO:0000303" key="5">
    <source>
    </source>
</evidence>
<evidence type="ECO:0000305" key="6"/>
<comment type="function">
    <text evidence="2">Ubiquitin-like protein that can be covalently attached to proteins as a monomer or as a lysine-linked polymer. Covalent attachment via an isopeptide bond to its substrates requires prior activation by the E1 complex SAE1-SAE2 and linkage to the E2 enzyme UBE2I, and can be promoted by an E3 ligase such as PIAS1-4, RANBP2 or CBX4. This post-translational modification on lysine residues of proteins plays a crucial role in a number of cellular processes such as nuclear transport, DNA replication and repair, mitosis and signal transduction. Polymeric SUMO2 chains are also susceptible to polyubiquitination which functions as a signal for proteasomal degradation of modified proteins. Plays a role in the regulation of sumoylation status of SETX (By similarity).</text>
</comment>
<comment type="subunit">
    <text evidence="2 3">Interacts with SAE2 and UBE2I. Interacts with ZNF451. Identified in a complex with ZNF451 and UBE2I/UBC9, where one ZNF451 interacts with one UBE2I/UBC9 and two SUMO2 chains, one bound to the UBE2I/UBC9 active site and the other to another region of the same UBE2I/UBC9 molecule. Covalently attached to a number of proteins. Interacts with PELP1. Interacts with USP25; the interaction sumoylates USP25. Interacts with SIMC1, CASP8AP2, RNF111 and SOBP (via SIM domains). Interacts with MTA1 (By similarity). Interacts with HINT1 (By similarity). Interacts with GCNA (via SIM domains); this interaction allows the GCNA recruitment to DPCs sites (By similarity).</text>
</comment>
<comment type="subcellular location">
    <subcellularLocation>
        <location evidence="1">Nucleus</location>
    </subcellularLocation>
    <subcellularLocation>
        <location evidence="1">Nucleus</location>
        <location evidence="1">PML body</location>
    </subcellularLocation>
</comment>
<comment type="PTM">
    <text evidence="1">Polymeric chains can be formed through Lys-11 cross-linking. Polymeric SUMO2 chains undergo 'Lys-6'-, 'Lys-11'-, 'Lys-48'- and 'Lys-63'-linked polyubiquitination by RNF4 (By similarity).</text>
</comment>
<comment type="PTM">
    <text evidence="1">Cleavage of precursor form by SENP1 or SENP2 is necessary for function.</text>
</comment>
<comment type="PTM">
    <text evidence="1">Monoubiquitinated N-terminally by UBE2W, which primes it for RNF4-dependent polyubiquitination by the UBE2V1-UBE2N heterodimer.</text>
</comment>
<comment type="similarity">
    <text evidence="6">Belongs to the ubiquitin family. SUMO subfamily.</text>
</comment>
<reference key="1">
    <citation type="journal article" date="1998" name="Virus Res.">
        <title>Insertion of a bovine SMT3B gene in NS4B and duplication of NS3 in a bovine viral diarrhea virus genome correlate with the cytopathogenicity of the virus.</title>
        <authorList>
            <person name="Qi F."/>
            <person name="Ridpath J.F."/>
            <person name="Berry E.S."/>
        </authorList>
    </citation>
    <scope>NUCLEOTIDE SEQUENCE [MRNA]</scope>
    <source>
        <tissue>Endometrium</tissue>
    </source>
</reference>
<reference key="2">
    <citation type="journal article" date="2005" name="BMC Genomics">
        <title>Characterization of 954 bovine full-CDS cDNA sequences.</title>
        <authorList>
            <person name="Harhay G.P."/>
            <person name="Sonstegard T.S."/>
            <person name="Keele J.W."/>
            <person name="Heaton M.P."/>
            <person name="Clawson M.L."/>
            <person name="Snelling W.M."/>
            <person name="Wiedmann R.T."/>
            <person name="Van Tassell C.P."/>
            <person name="Smith T.P.L."/>
        </authorList>
    </citation>
    <scope>NUCLEOTIDE SEQUENCE [LARGE SCALE MRNA]</scope>
</reference>
<reference key="3">
    <citation type="submission" date="2005-08" db="EMBL/GenBank/DDBJ databases">
        <authorList>
            <consortium name="NIH - Mammalian Gene Collection (MGC) project"/>
        </authorList>
    </citation>
    <scope>NUCLEOTIDE SEQUENCE [LARGE SCALE MRNA]</scope>
    <source>
        <strain>Crossbred X Angus</strain>
        <tissue>Ileum</tissue>
    </source>
</reference>
<accession>P61955</accession>
<accession>P55855</accession>
<accession>Q3ZCG1</accession>
<accession>Q5E979</accession>
<feature type="chain" id="PRO_0000035945" description="Small ubiquitin-related modifier 2">
    <location>
        <begin position="1"/>
        <end position="93"/>
    </location>
</feature>
<feature type="propeptide" id="PRO_0000035946" evidence="1">
    <location>
        <begin position="94"/>
        <end position="95"/>
    </location>
</feature>
<feature type="domain" description="Ubiquitin-like" evidence="4">
    <location>
        <begin position="16"/>
        <end position="95"/>
    </location>
</feature>
<feature type="modified residue" description="N6-acetyllysine; alternate" evidence="2">
    <location>
        <position position="11"/>
    </location>
</feature>
<feature type="cross-link" description="Peptide (Met-Gly) (interchain with G-Cter in ubiquitin)" evidence="1">
    <location>
        <position position="1"/>
    </location>
</feature>
<feature type="cross-link" description="Glycyl lysine isopeptide (Lys-Gly) (interchain with G-Cter in SUMO2)" evidence="2">
    <location>
        <position position="5"/>
    </location>
</feature>
<feature type="cross-link" description="Glycyl lysine isopeptide (Lys-Gly) (interchain with G-Cter in SUMO2)" evidence="2">
    <location>
        <position position="7"/>
    </location>
</feature>
<feature type="cross-link" description="Glycyl lysine isopeptide (Lys-Gly) (interchain with G-Cter in SUMO); alternate" evidence="1">
    <location>
        <position position="11"/>
    </location>
</feature>
<feature type="cross-link" description="Glycyl lysine isopeptide (Lys-Gly) (interchain with G-Cter in SUMO1); alternate" evidence="2">
    <location>
        <position position="11"/>
    </location>
</feature>
<feature type="cross-link" description="Glycyl lysine isopeptide (Lys-Gly) (interchain with G-Cter in SUMO2); alternate" evidence="2">
    <location>
        <position position="11"/>
    </location>
</feature>
<feature type="cross-link" description="Glycyl lysine isopeptide (Lys-Gly) (interchain with G-Cter in ubiquitin); alternate" evidence="2">
    <location>
        <position position="11"/>
    </location>
</feature>
<feature type="cross-link" description="Glycyl lysine isopeptide (Lys-Gly) (interchain with G-Cter in SUMO2)" evidence="2">
    <location>
        <position position="21"/>
    </location>
</feature>
<feature type="cross-link" description="Glycyl lysine isopeptide (Gly-Lys) (interchain with K-? in acceptor proteins)" evidence="4">
    <location>
        <position position="93"/>
    </location>
</feature>
<sequence length="95" mass="10871">MADEKPKEGVKTENNDHINLKVAGQDGSVVQFKIKRHTPLSKLMKAYCERQGLSMRQIRFRFDGQPINETDTPAQLEMEDEDTIDVFQQQTGGVY</sequence>